<name>PRMA_AERS4</name>
<reference key="1">
    <citation type="journal article" date="2008" name="BMC Genomics">
        <title>The genome of Aeromonas salmonicida subsp. salmonicida A449: insights into the evolution of a fish pathogen.</title>
        <authorList>
            <person name="Reith M.E."/>
            <person name="Singh R.K."/>
            <person name="Curtis B."/>
            <person name="Boyd J.M."/>
            <person name="Bouevitch A."/>
            <person name="Kimball J."/>
            <person name="Munholland J."/>
            <person name="Murphy C."/>
            <person name="Sarty D."/>
            <person name="Williams J."/>
            <person name="Nash J.H."/>
            <person name="Johnson S.C."/>
            <person name="Brown L.L."/>
        </authorList>
    </citation>
    <scope>NUCLEOTIDE SEQUENCE [LARGE SCALE GENOMIC DNA]</scope>
    <source>
        <strain>A449</strain>
    </source>
</reference>
<sequence>MPWIQIRINATAKTADKVSNMLLGRGAQPVTFMDAQDVPVYEPLPGETPLWGETEVMGLFDAETDPAPTIAFFQQIFGEDVGYKVEQLEDKDWVREWMDHFHPMQFGERLWICPSWRDVPNPDAVNVMLDPGLAFGTGTHPTTALCLQWLDGLDLAGKTVVDFGCGSGILGIAALKLGAARVIGIDIDPQAIQASHDNAERNGVAGQIELYLPADQPQDVEADVVVANILAGPLRELAPLIAGHGKPGSLMALSGVLESQAPELETIYGQWFDMDPTAVKEEWCRLSGRKHG</sequence>
<comment type="function">
    <text evidence="1">Methylates ribosomal protein L11.</text>
</comment>
<comment type="catalytic activity">
    <reaction evidence="1">
        <text>L-lysyl-[protein] + 3 S-adenosyl-L-methionine = N(6),N(6),N(6)-trimethyl-L-lysyl-[protein] + 3 S-adenosyl-L-homocysteine + 3 H(+)</text>
        <dbReference type="Rhea" id="RHEA:54192"/>
        <dbReference type="Rhea" id="RHEA-COMP:9752"/>
        <dbReference type="Rhea" id="RHEA-COMP:13826"/>
        <dbReference type="ChEBI" id="CHEBI:15378"/>
        <dbReference type="ChEBI" id="CHEBI:29969"/>
        <dbReference type="ChEBI" id="CHEBI:57856"/>
        <dbReference type="ChEBI" id="CHEBI:59789"/>
        <dbReference type="ChEBI" id="CHEBI:61961"/>
    </reaction>
</comment>
<comment type="subcellular location">
    <subcellularLocation>
        <location evidence="1">Cytoplasm</location>
    </subcellularLocation>
</comment>
<comment type="similarity">
    <text evidence="1">Belongs to the methyltransferase superfamily. PrmA family.</text>
</comment>
<proteinExistence type="inferred from homology"/>
<dbReference type="EC" id="2.1.1.-" evidence="1"/>
<dbReference type="EMBL" id="CP000644">
    <property type="protein sequence ID" value="ABO89089.1"/>
    <property type="molecule type" value="Genomic_DNA"/>
</dbReference>
<dbReference type="RefSeq" id="WP_011898421.1">
    <property type="nucleotide sequence ID" value="NC_009348.1"/>
</dbReference>
<dbReference type="SMR" id="A4SJL7"/>
<dbReference type="STRING" id="29491.GCA_000820065_01227"/>
<dbReference type="KEGG" id="asa:ASA_0958"/>
<dbReference type="PATRIC" id="fig|382245.13.peg.952"/>
<dbReference type="eggNOG" id="COG2264">
    <property type="taxonomic scope" value="Bacteria"/>
</dbReference>
<dbReference type="HOGENOM" id="CLU_049382_4_1_6"/>
<dbReference type="Proteomes" id="UP000000225">
    <property type="component" value="Chromosome"/>
</dbReference>
<dbReference type="GO" id="GO:0005829">
    <property type="term" value="C:cytosol"/>
    <property type="evidence" value="ECO:0007669"/>
    <property type="project" value="TreeGrafter"/>
</dbReference>
<dbReference type="GO" id="GO:0016279">
    <property type="term" value="F:protein-lysine N-methyltransferase activity"/>
    <property type="evidence" value="ECO:0007669"/>
    <property type="project" value="TreeGrafter"/>
</dbReference>
<dbReference type="GO" id="GO:0032259">
    <property type="term" value="P:methylation"/>
    <property type="evidence" value="ECO:0007669"/>
    <property type="project" value="UniProtKB-KW"/>
</dbReference>
<dbReference type="CDD" id="cd02440">
    <property type="entry name" value="AdoMet_MTases"/>
    <property type="match status" value="1"/>
</dbReference>
<dbReference type="Gene3D" id="3.40.50.150">
    <property type="entry name" value="Vaccinia Virus protein VP39"/>
    <property type="match status" value="1"/>
</dbReference>
<dbReference type="HAMAP" id="MF_00735">
    <property type="entry name" value="Methyltr_PrmA"/>
    <property type="match status" value="1"/>
</dbReference>
<dbReference type="InterPro" id="IPR050078">
    <property type="entry name" value="Ribosomal_L11_MeTrfase_PrmA"/>
</dbReference>
<dbReference type="InterPro" id="IPR004498">
    <property type="entry name" value="Ribosomal_PrmA_MeTrfase"/>
</dbReference>
<dbReference type="InterPro" id="IPR029063">
    <property type="entry name" value="SAM-dependent_MTases_sf"/>
</dbReference>
<dbReference type="NCBIfam" id="TIGR00406">
    <property type="entry name" value="prmA"/>
    <property type="match status" value="1"/>
</dbReference>
<dbReference type="PANTHER" id="PTHR43648">
    <property type="entry name" value="ELECTRON TRANSFER FLAVOPROTEIN BETA SUBUNIT LYSINE METHYLTRANSFERASE"/>
    <property type="match status" value="1"/>
</dbReference>
<dbReference type="PANTHER" id="PTHR43648:SF1">
    <property type="entry name" value="ELECTRON TRANSFER FLAVOPROTEIN BETA SUBUNIT LYSINE METHYLTRANSFERASE"/>
    <property type="match status" value="1"/>
</dbReference>
<dbReference type="Pfam" id="PF06325">
    <property type="entry name" value="PrmA"/>
    <property type="match status" value="1"/>
</dbReference>
<dbReference type="PIRSF" id="PIRSF000401">
    <property type="entry name" value="RPL11_MTase"/>
    <property type="match status" value="1"/>
</dbReference>
<dbReference type="SUPFAM" id="SSF53335">
    <property type="entry name" value="S-adenosyl-L-methionine-dependent methyltransferases"/>
    <property type="match status" value="1"/>
</dbReference>
<gene>
    <name evidence="1" type="primary">prmA</name>
    <name type="ordered locus">ASA_0958</name>
</gene>
<protein>
    <recommendedName>
        <fullName evidence="1">Ribosomal protein L11 methyltransferase</fullName>
        <shortName evidence="1">L11 Mtase</shortName>
        <ecNumber evidence="1">2.1.1.-</ecNumber>
    </recommendedName>
</protein>
<keyword id="KW-0963">Cytoplasm</keyword>
<keyword id="KW-0489">Methyltransferase</keyword>
<keyword id="KW-0949">S-adenosyl-L-methionine</keyword>
<keyword id="KW-0808">Transferase</keyword>
<accession>A4SJL7</accession>
<evidence type="ECO:0000255" key="1">
    <source>
        <dbReference type="HAMAP-Rule" id="MF_00735"/>
    </source>
</evidence>
<organism>
    <name type="scientific">Aeromonas salmonicida (strain A449)</name>
    <dbReference type="NCBI Taxonomy" id="382245"/>
    <lineage>
        <taxon>Bacteria</taxon>
        <taxon>Pseudomonadati</taxon>
        <taxon>Pseudomonadota</taxon>
        <taxon>Gammaproteobacteria</taxon>
        <taxon>Aeromonadales</taxon>
        <taxon>Aeromonadaceae</taxon>
        <taxon>Aeromonas</taxon>
    </lineage>
</organism>
<feature type="chain" id="PRO_1000045981" description="Ribosomal protein L11 methyltransferase">
    <location>
        <begin position="1"/>
        <end position="292"/>
    </location>
</feature>
<feature type="binding site" evidence="1">
    <location>
        <position position="143"/>
    </location>
    <ligand>
        <name>S-adenosyl-L-methionine</name>
        <dbReference type="ChEBI" id="CHEBI:59789"/>
    </ligand>
</feature>
<feature type="binding site" evidence="1">
    <location>
        <position position="164"/>
    </location>
    <ligand>
        <name>S-adenosyl-L-methionine</name>
        <dbReference type="ChEBI" id="CHEBI:59789"/>
    </ligand>
</feature>
<feature type="binding site" evidence="1">
    <location>
        <position position="186"/>
    </location>
    <ligand>
        <name>S-adenosyl-L-methionine</name>
        <dbReference type="ChEBI" id="CHEBI:59789"/>
    </ligand>
</feature>
<feature type="binding site" evidence="1">
    <location>
        <position position="228"/>
    </location>
    <ligand>
        <name>S-adenosyl-L-methionine</name>
        <dbReference type="ChEBI" id="CHEBI:59789"/>
    </ligand>
</feature>